<sequence>MSLETYKFSDELHDDFKVVDSWINNGAKWLEDIQLYYKERSSIEKEYAQKLASLSNKYGEKKSRKSSALSVGDTPAMSAGSLECASLTTWSKILDELTRSSKTHQKLSDDYSLDIAEKLKKLESHIEALRKVYDDLYKKFSSEKETLLNSVKRAKVSYHEACDDLESARQKNDKYREQKTQRNLKLSESDMLDKKNKYLLRMLVYNAHKQKFYNETLPTLLNHMQVLNEYRVSNLNEIWCNSFSIEKSLHDTLSQRTVEIQSEIAKNEPVLDSAMFGRHNSKNWALPADLHFEPSPIWHDTDALVVDGSCKNYLRNLLVHSKNDLGKQKGELVSLDSQLEGLRVDDPNSANQSFESKKASINLEGKELMVKARIEDLEVRINKITSVANNLEEGGRFHDFKHVSFKLPTSCSYCREIIWGLSKRGCVCKNCGFKCHARCELLVPANCKNGEPEVADDDAVDTSVTATDDFDASASSSNAYESYRNTYTDDMDSSSIYQTSLSNVKTEETTPAEPASKVDGVVLYDFTGEHEGVITASEGQEFTLLEPDDGSGWVRVKIDGTDGLIPASYVKLNDELNTSVTLDGDSSYVKALYAYTAQSDMELSIQEGDIIQVTNRNAGNGWSEGILNGVTGQFPANYVTDV</sequence>
<reference key="1">
    <citation type="journal article" date="2002" name="Nature">
        <title>The genome sequence of Schizosaccharomyces pombe.</title>
        <authorList>
            <person name="Wood V."/>
            <person name="Gwilliam R."/>
            <person name="Rajandream M.A."/>
            <person name="Lyne M.H."/>
            <person name="Lyne R."/>
            <person name="Stewart A."/>
            <person name="Sgouros J.G."/>
            <person name="Peat N."/>
            <person name="Hayles J."/>
            <person name="Baker S.G."/>
            <person name="Basham D."/>
            <person name="Bowman S."/>
            <person name="Brooks K."/>
            <person name="Brown D."/>
            <person name="Brown S."/>
            <person name="Chillingworth T."/>
            <person name="Churcher C.M."/>
            <person name="Collins M."/>
            <person name="Connor R."/>
            <person name="Cronin A."/>
            <person name="Davis P."/>
            <person name="Feltwell T."/>
            <person name="Fraser A."/>
            <person name="Gentles S."/>
            <person name="Goble A."/>
            <person name="Hamlin N."/>
            <person name="Harris D.E."/>
            <person name="Hidalgo J."/>
            <person name="Hodgson G."/>
            <person name="Holroyd S."/>
            <person name="Hornsby T."/>
            <person name="Howarth S."/>
            <person name="Huckle E.J."/>
            <person name="Hunt S."/>
            <person name="Jagels K."/>
            <person name="James K.D."/>
            <person name="Jones L."/>
            <person name="Jones M."/>
            <person name="Leather S."/>
            <person name="McDonald S."/>
            <person name="McLean J."/>
            <person name="Mooney P."/>
            <person name="Moule S."/>
            <person name="Mungall K.L."/>
            <person name="Murphy L.D."/>
            <person name="Niblett D."/>
            <person name="Odell C."/>
            <person name="Oliver K."/>
            <person name="O'Neil S."/>
            <person name="Pearson D."/>
            <person name="Quail M.A."/>
            <person name="Rabbinowitsch E."/>
            <person name="Rutherford K.M."/>
            <person name="Rutter S."/>
            <person name="Saunders D."/>
            <person name="Seeger K."/>
            <person name="Sharp S."/>
            <person name="Skelton J."/>
            <person name="Simmonds M.N."/>
            <person name="Squares R."/>
            <person name="Squares S."/>
            <person name="Stevens K."/>
            <person name="Taylor K."/>
            <person name="Taylor R.G."/>
            <person name="Tivey A."/>
            <person name="Walsh S.V."/>
            <person name="Warren T."/>
            <person name="Whitehead S."/>
            <person name="Woodward J.R."/>
            <person name="Volckaert G."/>
            <person name="Aert R."/>
            <person name="Robben J."/>
            <person name="Grymonprez B."/>
            <person name="Weltjens I."/>
            <person name="Vanstreels E."/>
            <person name="Rieger M."/>
            <person name="Schaefer M."/>
            <person name="Mueller-Auer S."/>
            <person name="Gabel C."/>
            <person name="Fuchs M."/>
            <person name="Duesterhoeft A."/>
            <person name="Fritzc C."/>
            <person name="Holzer E."/>
            <person name="Moestl D."/>
            <person name="Hilbert H."/>
            <person name="Borzym K."/>
            <person name="Langer I."/>
            <person name="Beck A."/>
            <person name="Lehrach H."/>
            <person name="Reinhardt R."/>
            <person name="Pohl T.M."/>
            <person name="Eger P."/>
            <person name="Zimmermann W."/>
            <person name="Wedler H."/>
            <person name="Wambutt R."/>
            <person name="Purnelle B."/>
            <person name="Goffeau A."/>
            <person name="Cadieu E."/>
            <person name="Dreano S."/>
            <person name="Gloux S."/>
            <person name="Lelaure V."/>
            <person name="Mottier S."/>
            <person name="Galibert F."/>
            <person name="Aves S.J."/>
            <person name="Xiang Z."/>
            <person name="Hunt C."/>
            <person name="Moore K."/>
            <person name="Hurst S.M."/>
            <person name="Lucas M."/>
            <person name="Rochet M."/>
            <person name="Gaillardin C."/>
            <person name="Tallada V.A."/>
            <person name="Garzon A."/>
            <person name="Thode G."/>
            <person name="Daga R.R."/>
            <person name="Cruzado L."/>
            <person name="Jimenez J."/>
            <person name="Sanchez M."/>
            <person name="del Rey F."/>
            <person name="Benito J."/>
            <person name="Dominguez A."/>
            <person name="Revuelta J.L."/>
            <person name="Moreno S."/>
            <person name="Armstrong J."/>
            <person name="Forsburg S.L."/>
            <person name="Cerutti L."/>
            <person name="Lowe T."/>
            <person name="McCombie W.R."/>
            <person name="Paulsen I."/>
            <person name="Potashkin J."/>
            <person name="Shpakovski G.V."/>
            <person name="Ussery D."/>
            <person name="Barrell B.G."/>
            <person name="Nurse P."/>
        </authorList>
    </citation>
    <scope>NUCLEOTIDE SEQUENCE [LARGE SCALE GENOMIC DNA]</scope>
    <source>
        <strain>972 / ATCC 24843</strain>
    </source>
</reference>
<reference key="2">
    <citation type="journal article" date="2006" name="Nat. Biotechnol.">
        <title>ORFeome cloning and global analysis of protein localization in the fission yeast Schizosaccharomyces pombe.</title>
        <authorList>
            <person name="Matsuyama A."/>
            <person name="Arai R."/>
            <person name="Yashiroda Y."/>
            <person name="Shirai A."/>
            <person name="Kamata A."/>
            <person name="Sekido S."/>
            <person name="Kobayashi Y."/>
            <person name="Hashimoto A."/>
            <person name="Hamamoto M."/>
            <person name="Hiraoka Y."/>
            <person name="Horinouchi S."/>
            <person name="Yoshida M."/>
        </authorList>
    </citation>
    <scope>SUBCELLULAR LOCATION [LARGE SCALE ANALYSIS]</scope>
</reference>
<proteinExistence type="inferred from homology"/>
<evidence type="ECO:0000250" key="1"/>
<evidence type="ECO:0000255" key="2"/>
<evidence type="ECO:0000255" key="3">
    <source>
        <dbReference type="PROSITE-ProRule" id="PRU00192"/>
    </source>
</evidence>
<evidence type="ECO:0000255" key="4">
    <source>
        <dbReference type="PROSITE-ProRule" id="PRU00226"/>
    </source>
</evidence>
<evidence type="ECO:0000255" key="5">
    <source>
        <dbReference type="PROSITE-ProRule" id="PRU01077"/>
    </source>
</evidence>
<evidence type="ECO:0000269" key="6">
    <source>
    </source>
</evidence>
<evidence type="ECO:0000305" key="7"/>
<name>BZZ1_SCHPO</name>
<dbReference type="EMBL" id="CU329671">
    <property type="protein sequence ID" value="CAA90818.1"/>
    <property type="molecule type" value="Genomic_DNA"/>
</dbReference>
<dbReference type="PIR" id="T39376">
    <property type="entry name" value="T39376"/>
</dbReference>
<dbReference type="RefSeq" id="NP_596017.1">
    <property type="nucleotide sequence ID" value="NM_001021925.2"/>
</dbReference>
<dbReference type="SMR" id="Q09746"/>
<dbReference type="BioGRID" id="276234">
    <property type="interactions" value="50"/>
</dbReference>
<dbReference type="FunCoup" id="Q09746">
    <property type="interactions" value="113"/>
</dbReference>
<dbReference type="STRING" id="284812.Q09746"/>
<dbReference type="iPTMnet" id="Q09746"/>
<dbReference type="PaxDb" id="4896-SPBC12C2.05c.1"/>
<dbReference type="EnsemblFungi" id="SPBC12C2.05c.1">
    <property type="protein sequence ID" value="SPBC12C2.05c.1:pep"/>
    <property type="gene ID" value="SPBC12C2.05c"/>
</dbReference>
<dbReference type="GeneID" id="2539679"/>
<dbReference type="KEGG" id="spo:2539679"/>
<dbReference type="PomBase" id="SPBC12C2.05c">
    <property type="gene designation" value="bzz1"/>
</dbReference>
<dbReference type="VEuPathDB" id="FungiDB:SPBC12C2.05c"/>
<dbReference type="eggNOG" id="KOG3565">
    <property type="taxonomic scope" value="Eukaryota"/>
</dbReference>
<dbReference type="HOGENOM" id="CLU_015390_1_0_1"/>
<dbReference type="InParanoid" id="Q09746"/>
<dbReference type="OMA" id="TPMMEEP"/>
<dbReference type="PhylomeDB" id="Q09746"/>
<dbReference type="Reactome" id="R-SPO-8856828">
    <property type="pathway name" value="Clathrin-mediated endocytosis"/>
</dbReference>
<dbReference type="Reactome" id="R-SPO-9013406">
    <property type="pathway name" value="RHOQ GTPase cycle"/>
</dbReference>
<dbReference type="Reactome" id="R-SPO-9696270">
    <property type="pathway name" value="RND2 GTPase cycle"/>
</dbReference>
<dbReference type="PRO" id="PR:Q09746"/>
<dbReference type="Proteomes" id="UP000002485">
    <property type="component" value="Chromosome II"/>
</dbReference>
<dbReference type="GO" id="GO:0030479">
    <property type="term" value="C:actin cortical patch"/>
    <property type="evidence" value="ECO:0000314"/>
    <property type="project" value="PomBase"/>
</dbReference>
<dbReference type="GO" id="GO:0032153">
    <property type="term" value="C:cell division site"/>
    <property type="evidence" value="ECO:0007005"/>
    <property type="project" value="PomBase"/>
</dbReference>
<dbReference type="GO" id="GO:0051286">
    <property type="term" value="C:cell tip"/>
    <property type="evidence" value="ECO:0007005"/>
    <property type="project" value="PomBase"/>
</dbReference>
<dbReference type="GO" id="GO:0106006">
    <property type="term" value="F:cytoskeletal protein-membrane anchor activity"/>
    <property type="evidence" value="ECO:0000353"/>
    <property type="project" value="PomBase"/>
</dbReference>
<dbReference type="GO" id="GO:0019992">
    <property type="term" value="F:diacylglycerol binding"/>
    <property type="evidence" value="ECO:0000255"/>
    <property type="project" value="PomBase"/>
</dbReference>
<dbReference type="GO" id="GO:0008270">
    <property type="term" value="F:zinc ion binding"/>
    <property type="evidence" value="ECO:0007669"/>
    <property type="project" value="UniProtKB-KW"/>
</dbReference>
<dbReference type="GO" id="GO:0034314">
    <property type="term" value="P:Arp2/3 complex-mediated actin nucleation"/>
    <property type="evidence" value="ECO:0000315"/>
    <property type="project" value="PomBase"/>
</dbReference>
<dbReference type="GO" id="GO:0072583">
    <property type="term" value="P:clathrin-dependent endocytosis"/>
    <property type="evidence" value="ECO:0000315"/>
    <property type="project" value="PomBase"/>
</dbReference>
<dbReference type="GO" id="GO:0030833">
    <property type="term" value="P:regulation of actin filament polymerization"/>
    <property type="evidence" value="ECO:0000318"/>
    <property type="project" value="GO_Central"/>
</dbReference>
<dbReference type="CDD" id="cd20824">
    <property type="entry name" value="C1_SpBZZ1-like"/>
    <property type="match status" value="1"/>
</dbReference>
<dbReference type="CDD" id="cd11912">
    <property type="entry name" value="SH3_Bzz1_1"/>
    <property type="match status" value="1"/>
</dbReference>
<dbReference type="FunFam" id="1.20.1270.60:FF:000060">
    <property type="entry name" value="Actin polymerization protein Bzz1"/>
    <property type="match status" value="1"/>
</dbReference>
<dbReference type="FunFam" id="3.30.60.20:FF:000040">
    <property type="entry name" value="Actin polymerization protein Bzz1"/>
    <property type="match status" value="1"/>
</dbReference>
<dbReference type="FunFam" id="2.30.30.40:FF:000072">
    <property type="entry name" value="Unconventional Myosin IB"/>
    <property type="match status" value="1"/>
</dbReference>
<dbReference type="Gene3D" id="3.30.60.20">
    <property type="match status" value="1"/>
</dbReference>
<dbReference type="Gene3D" id="1.20.1270.60">
    <property type="entry name" value="Arfaptin homology (AH) domain/BAR domain"/>
    <property type="match status" value="1"/>
</dbReference>
<dbReference type="Gene3D" id="2.30.30.40">
    <property type="entry name" value="SH3 Domains"/>
    <property type="match status" value="2"/>
</dbReference>
<dbReference type="InterPro" id="IPR027267">
    <property type="entry name" value="AH/BAR_dom_sf"/>
</dbReference>
<dbReference type="InterPro" id="IPR035459">
    <property type="entry name" value="Bzz1_SH3_1"/>
</dbReference>
<dbReference type="InterPro" id="IPR046349">
    <property type="entry name" value="C1-like_sf"/>
</dbReference>
<dbReference type="InterPro" id="IPR020454">
    <property type="entry name" value="DAG/PE-bd"/>
</dbReference>
<dbReference type="InterPro" id="IPR031160">
    <property type="entry name" value="F_BAR"/>
</dbReference>
<dbReference type="InterPro" id="IPR001060">
    <property type="entry name" value="FCH_dom"/>
</dbReference>
<dbReference type="InterPro" id="IPR002219">
    <property type="entry name" value="PE/DAG-bd"/>
</dbReference>
<dbReference type="InterPro" id="IPR036028">
    <property type="entry name" value="SH3-like_dom_sf"/>
</dbReference>
<dbReference type="InterPro" id="IPR001452">
    <property type="entry name" value="SH3_domain"/>
</dbReference>
<dbReference type="PANTHER" id="PTHR15735">
    <property type="entry name" value="FCH AND DOUBLE SH3 DOMAINS PROTEIN"/>
    <property type="match status" value="1"/>
</dbReference>
<dbReference type="PANTHER" id="PTHR15735:SF21">
    <property type="entry name" value="PROTEIN NERVOUS WRECK"/>
    <property type="match status" value="1"/>
</dbReference>
<dbReference type="Pfam" id="PF00130">
    <property type="entry name" value="C1_1"/>
    <property type="match status" value="1"/>
</dbReference>
<dbReference type="Pfam" id="PF00611">
    <property type="entry name" value="FCH"/>
    <property type="match status" value="1"/>
</dbReference>
<dbReference type="Pfam" id="PF00018">
    <property type="entry name" value="SH3_1"/>
    <property type="match status" value="1"/>
</dbReference>
<dbReference type="Pfam" id="PF14604">
    <property type="entry name" value="SH3_9"/>
    <property type="match status" value="1"/>
</dbReference>
<dbReference type="PRINTS" id="PR00008">
    <property type="entry name" value="DAGPEDOMAIN"/>
</dbReference>
<dbReference type="PRINTS" id="PR00452">
    <property type="entry name" value="SH3DOMAIN"/>
</dbReference>
<dbReference type="SMART" id="SM00109">
    <property type="entry name" value="C1"/>
    <property type="match status" value="1"/>
</dbReference>
<dbReference type="SMART" id="SM00055">
    <property type="entry name" value="FCH"/>
    <property type="match status" value="1"/>
</dbReference>
<dbReference type="SMART" id="SM00326">
    <property type="entry name" value="SH3"/>
    <property type="match status" value="2"/>
</dbReference>
<dbReference type="SUPFAM" id="SSF103657">
    <property type="entry name" value="BAR/IMD domain-like"/>
    <property type="match status" value="1"/>
</dbReference>
<dbReference type="SUPFAM" id="SSF57889">
    <property type="entry name" value="Cysteine-rich domain"/>
    <property type="match status" value="1"/>
</dbReference>
<dbReference type="SUPFAM" id="SSF50044">
    <property type="entry name" value="SH3-domain"/>
    <property type="match status" value="2"/>
</dbReference>
<dbReference type="PROSITE" id="PS51741">
    <property type="entry name" value="F_BAR"/>
    <property type="match status" value="1"/>
</dbReference>
<dbReference type="PROSITE" id="PS50002">
    <property type="entry name" value="SH3"/>
    <property type="match status" value="2"/>
</dbReference>
<dbReference type="PROSITE" id="PS00479">
    <property type="entry name" value="ZF_DAG_PE_1"/>
    <property type="match status" value="1"/>
</dbReference>
<dbReference type="PROSITE" id="PS50081">
    <property type="entry name" value="ZF_DAG_PE_2"/>
    <property type="match status" value="1"/>
</dbReference>
<organism>
    <name type="scientific">Schizosaccharomyces pombe (strain 972 / ATCC 24843)</name>
    <name type="common">Fission yeast</name>
    <dbReference type="NCBI Taxonomy" id="284812"/>
    <lineage>
        <taxon>Eukaryota</taxon>
        <taxon>Fungi</taxon>
        <taxon>Dikarya</taxon>
        <taxon>Ascomycota</taxon>
        <taxon>Taphrinomycotina</taxon>
        <taxon>Schizosaccharomycetes</taxon>
        <taxon>Schizosaccharomycetales</taxon>
        <taxon>Schizosaccharomycetaceae</taxon>
        <taxon>Schizosaccharomyces</taxon>
    </lineage>
</organism>
<comment type="function">
    <text evidence="1">Plays a role in endocytosis and trafficking to the vacuole. Functions with type I myosins to restore polarity of the actin cytoskeleton after NaCl stress (By similarity).</text>
</comment>
<comment type="subcellular location">
    <subcellularLocation>
        <location evidence="6">Cell tip</location>
    </subcellularLocation>
    <subcellularLocation>
        <location evidence="1">Cytoplasm</location>
        <location evidence="1">Cytoskeleton</location>
        <location evidence="1">Actin patch</location>
    </subcellularLocation>
</comment>
<comment type="similarity">
    <text evidence="7">Belongs to the BZZ1 family.</text>
</comment>
<feature type="chain" id="PRO_0000116505" description="Protein BZZ1">
    <location>
        <begin position="1"/>
        <end position="642"/>
    </location>
</feature>
<feature type="domain" description="F-BAR" evidence="5">
    <location>
        <begin position="6"/>
        <end position="272"/>
    </location>
</feature>
<feature type="domain" description="SH3 1" evidence="3">
    <location>
        <begin position="515"/>
        <end position="575"/>
    </location>
</feature>
<feature type="domain" description="SH3 2" evidence="3">
    <location>
        <begin position="584"/>
        <end position="642"/>
    </location>
</feature>
<feature type="zinc finger region" description="Phorbol-ester/DAG-type" evidence="4">
    <location>
        <begin position="397"/>
        <end position="447"/>
    </location>
</feature>
<feature type="coiled-coil region" evidence="2">
    <location>
        <begin position="113"/>
        <end position="190"/>
    </location>
</feature>
<gene>
    <name type="primary">bzz1</name>
    <name type="ORF">SPBC12C2.05c</name>
</gene>
<accession>Q09746</accession>
<protein>
    <recommendedName>
        <fullName>Protein BZZ1</fullName>
    </recommendedName>
</protein>
<keyword id="KW-0175">Coiled coil</keyword>
<keyword id="KW-0963">Cytoplasm</keyword>
<keyword id="KW-0206">Cytoskeleton</keyword>
<keyword id="KW-0254">Endocytosis</keyword>
<keyword id="KW-0479">Metal-binding</keyword>
<keyword id="KW-1185">Reference proteome</keyword>
<keyword id="KW-0677">Repeat</keyword>
<keyword id="KW-0728">SH3 domain</keyword>
<keyword id="KW-0862">Zinc</keyword>
<keyword id="KW-0863">Zinc-finger</keyword>